<keyword id="KW-0687">Ribonucleoprotein</keyword>
<keyword id="KW-0689">Ribosomal protein</keyword>
<keyword id="KW-0694">RNA-binding</keyword>
<keyword id="KW-0699">rRNA-binding</keyword>
<feature type="chain" id="PRO_0000125291" description="Large ribosomal subunit protein uL22">
    <location>
        <begin position="1"/>
        <end position="148"/>
    </location>
</feature>
<name>RL22_THEVO</name>
<accession>Q97BX2</accession>
<gene>
    <name evidence="1" type="primary">rpl22</name>
    <name type="ordered locus">TV0333</name>
    <name type="ORF">TVG0335848</name>
</gene>
<proteinExistence type="inferred from homology"/>
<reference key="1">
    <citation type="journal article" date="2000" name="Proc. Natl. Acad. Sci. U.S.A.">
        <title>Archaeal adaptation to higher temperatures revealed by genomic sequence of Thermoplasma volcanium.</title>
        <authorList>
            <person name="Kawashima T."/>
            <person name="Amano N."/>
            <person name="Koike H."/>
            <person name="Makino S."/>
            <person name="Higuchi S."/>
            <person name="Kawashima-Ohya Y."/>
            <person name="Watanabe K."/>
            <person name="Yamazaki M."/>
            <person name="Kanehori K."/>
            <person name="Kawamoto T."/>
            <person name="Nunoshiba T."/>
            <person name="Yamamoto Y."/>
            <person name="Aramaki H."/>
            <person name="Makino K."/>
            <person name="Suzuki M."/>
        </authorList>
    </citation>
    <scope>NUCLEOTIDE SEQUENCE [LARGE SCALE GENOMIC DNA]</scope>
    <source>
        <strain>ATCC 51530 / DSM 4299 / JCM 9571 / NBRC 15438 / GSS1</strain>
    </source>
</reference>
<sequence>MKGYSMSVDENNARARIVEADISLKDAVNIAHHIRGMKLDYAKQILEDVVSKKYAIPYFRYLDSVSHRPGKGPGRYPVKAAKVFIDLLSNVENNAEFKGMNTDSLIIKHVAANKGRMIKKYTPKAYGRAGANFKDLINLEVIVTEGDQ</sequence>
<organism>
    <name type="scientific">Thermoplasma volcanium (strain ATCC 51530 / DSM 4299 / JCM 9571 / NBRC 15438 / GSS1)</name>
    <dbReference type="NCBI Taxonomy" id="273116"/>
    <lineage>
        <taxon>Archaea</taxon>
        <taxon>Methanobacteriati</taxon>
        <taxon>Thermoplasmatota</taxon>
        <taxon>Thermoplasmata</taxon>
        <taxon>Thermoplasmatales</taxon>
        <taxon>Thermoplasmataceae</taxon>
        <taxon>Thermoplasma</taxon>
    </lineage>
</organism>
<comment type="function">
    <text evidence="1">This protein binds specifically to 23S rRNA. It makes multiple contacts with different domains of the 23S rRNA in the assembled 50S subunit and ribosome.</text>
</comment>
<comment type="function">
    <text evidence="1">The globular domain of the protein is located near the polypeptide exit tunnel on the outside of the subunit, while an extended beta-hairpin is found that lines the wall of the exit tunnel in the center of the 70S ribosome.</text>
</comment>
<comment type="subunit">
    <text evidence="1">Part of the 50S ribosomal subunit.</text>
</comment>
<comment type="similarity">
    <text evidence="1">Belongs to the universal ribosomal protein uL22 family.</text>
</comment>
<dbReference type="EMBL" id="BA000011">
    <property type="protein sequence ID" value="BAB59475.1"/>
    <property type="molecule type" value="Genomic_DNA"/>
</dbReference>
<dbReference type="RefSeq" id="WP_048054074.1">
    <property type="nucleotide sequence ID" value="NC_002689.2"/>
</dbReference>
<dbReference type="SMR" id="Q97BX2"/>
<dbReference type="STRING" id="273116.gene:9381110"/>
<dbReference type="PaxDb" id="273116-14324548"/>
<dbReference type="GeneID" id="1440845"/>
<dbReference type="KEGG" id="tvo:TVG0335848"/>
<dbReference type="eggNOG" id="arCOG04098">
    <property type="taxonomic scope" value="Archaea"/>
</dbReference>
<dbReference type="HOGENOM" id="CLU_083987_0_2_2"/>
<dbReference type="OrthoDB" id="314984at2157"/>
<dbReference type="PhylomeDB" id="Q97BX2"/>
<dbReference type="Proteomes" id="UP000001017">
    <property type="component" value="Chromosome"/>
</dbReference>
<dbReference type="GO" id="GO:0022625">
    <property type="term" value="C:cytosolic large ribosomal subunit"/>
    <property type="evidence" value="ECO:0007669"/>
    <property type="project" value="TreeGrafter"/>
</dbReference>
<dbReference type="GO" id="GO:0019843">
    <property type="term" value="F:rRNA binding"/>
    <property type="evidence" value="ECO:0007669"/>
    <property type="project" value="UniProtKB-UniRule"/>
</dbReference>
<dbReference type="GO" id="GO:0003735">
    <property type="term" value="F:structural constituent of ribosome"/>
    <property type="evidence" value="ECO:0007669"/>
    <property type="project" value="InterPro"/>
</dbReference>
<dbReference type="GO" id="GO:0002181">
    <property type="term" value="P:cytoplasmic translation"/>
    <property type="evidence" value="ECO:0007669"/>
    <property type="project" value="TreeGrafter"/>
</dbReference>
<dbReference type="Gene3D" id="3.90.470.10">
    <property type="entry name" value="Ribosomal protein L22/L17"/>
    <property type="match status" value="1"/>
</dbReference>
<dbReference type="HAMAP" id="MF_01331_A">
    <property type="entry name" value="Ribosomal_uL22_A"/>
    <property type="match status" value="1"/>
</dbReference>
<dbReference type="InterPro" id="IPR001063">
    <property type="entry name" value="Ribosomal_uL22"/>
</dbReference>
<dbReference type="InterPro" id="IPR005721">
    <property type="entry name" value="Ribosomal_uL22_euk/arc"/>
</dbReference>
<dbReference type="InterPro" id="IPR036394">
    <property type="entry name" value="Ribosomal_uL22_sf"/>
</dbReference>
<dbReference type="NCBIfam" id="NF003260">
    <property type="entry name" value="PRK04223.1"/>
    <property type="match status" value="1"/>
</dbReference>
<dbReference type="NCBIfam" id="TIGR01038">
    <property type="entry name" value="uL22_arch_euk"/>
    <property type="match status" value="1"/>
</dbReference>
<dbReference type="PANTHER" id="PTHR11593">
    <property type="entry name" value="60S RIBOSOMAL PROTEIN L17"/>
    <property type="match status" value="1"/>
</dbReference>
<dbReference type="PANTHER" id="PTHR11593:SF10">
    <property type="entry name" value="60S RIBOSOMAL PROTEIN L17"/>
    <property type="match status" value="1"/>
</dbReference>
<dbReference type="Pfam" id="PF00237">
    <property type="entry name" value="Ribosomal_L22"/>
    <property type="match status" value="1"/>
</dbReference>
<dbReference type="SUPFAM" id="SSF54843">
    <property type="entry name" value="Ribosomal protein L22"/>
    <property type="match status" value="1"/>
</dbReference>
<protein>
    <recommendedName>
        <fullName evidence="1">Large ribosomal subunit protein uL22</fullName>
    </recommendedName>
    <alternativeName>
        <fullName evidence="2">50S ribosomal protein L22</fullName>
    </alternativeName>
</protein>
<evidence type="ECO:0000255" key="1">
    <source>
        <dbReference type="HAMAP-Rule" id="MF_01331"/>
    </source>
</evidence>
<evidence type="ECO:0000305" key="2"/>